<name>EFG_CLOBH</name>
<comment type="function">
    <text evidence="1">Catalyzes the GTP-dependent ribosomal translocation step during translation elongation. During this step, the ribosome changes from the pre-translocational (PRE) to the post-translocational (POST) state as the newly formed A-site-bound peptidyl-tRNA and P-site-bound deacylated tRNA move to the P and E sites, respectively. Catalyzes the coordinated movement of the two tRNA molecules, the mRNA and conformational changes in the ribosome.</text>
</comment>
<comment type="subcellular location">
    <subcellularLocation>
        <location evidence="1">Cytoplasm</location>
    </subcellularLocation>
</comment>
<comment type="similarity">
    <text evidence="1">Belongs to the TRAFAC class translation factor GTPase superfamily. Classic translation factor GTPase family. EF-G/EF-2 subfamily.</text>
</comment>
<feature type="chain" id="PRO_0000335840" description="Elongation factor G">
    <location>
        <begin position="1"/>
        <end position="689"/>
    </location>
</feature>
<feature type="domain" description="tr-type G">
    <location>
        <begin position="9"/>
        <end position="283"/>
    </location>
</feature>
<feature type="binding site" evidence="1">
    <location>
        <begin position="18"/>
        <end position="25"/>
    </location>
    <ligand>
        <name>GTP</name>
        <dbReference type="ChEBI" id="CHEBI:37565"/>
    </ligand>
</feature>
<feature type="binding site" evidence="1">
    <location>
        <begin position="82"/>
        <end position="86"/>
    </location>
    <ligand>
        <name>GTP</name>
        <dbReference type="ChEBI" id="CHEBI:37565"/>
    </ligand>
</feature>
<feature type="binding site" evidence="1">
    <location>
        <begin position="136"/>
        <end position="139"/>
    </location>
    <ligand>
        <name>GTP</name>
        <dbReference type="ChEBI" id="CHEBI:37565"/>
    </ligand>
</feature>
<protein>
    <recommendedName>
        <fullName evidence="1">Elongation factor G</fullName>
        <shortName evidence="1">EF-G</shortName>
    </recommendedName>
</protein>
<reference key="1">
    <citation type="journal article" date="2007" name="Genome Res.">
        <title>Genome sequence of a proteolytic (Group I) Clostridium botulinum strain Hall A and comparative analysis of the clostridial genomes.</title>
        <authorList>
            <person name="Sebaihia M."/>
            <person name="Peck M.W."/>
            <person name="Minton N.P."/>
            <person name="Thomson N.R."/>
            <person name="Holden M.T.G."/>
            <person name="Mitchell W.J."/>
            <person name="Carter A.T."/>
            <person name="Bentley S.D."/>
            <person name="Mason D.R."/>
            <person name="Crossman L."/>
            <person name="Paul C.J."/>
            <person name="Ivens A."/>
            <person name="Wells-Bennik M.H.J."/>
            <person name="Davis I.J."/>
            <person name="Cerdeno-Tarraga A.M."/>
            <person name="Churcher C."/>
            <person name="Quail M.A."/>
            <person name="Chillingworth T."/>
            <person name="Feltwell T."/>
            <person name="Fraser A."/>
            <person name="Goodhead I."/>
            <person name="Hance Z."/>
            <person name="Jagels K."/>
            <person name="Larke N."/>
            <person name="Maddison M."/>
            <person name="Moule S."/>
            <person name="Mungall K."/>
            <person name="Norbertczak H."/>
            <person name="Rabbinowitsch E."/>
            <person name="Sanders M."/>
            <person name="Simmonds M."/>
            <person name="White B."/>
            <person name="Whithead S."/>
            <person name="Parkhill J."/>
        </authorList>
    </citation>
    <scope>NUCLEOTIDE SEQUENCE [LARGE SCALE GENOMIC DNA]</scope>
    <source>
        <strain>Hall / ATCC 3502 / NCTC 13319 / Type A</strain>
    </source>
</reference>
<reference key="2">
    <citation type="journal article" date="2007" name="PLoS ONE">
        <title>Analysis of the neurotoxin complex genes in Clostridium botulinum A1-A4 and B1 strains: BoNT/A3, /Ba4 and /B1 clusters are located within plasmids.</title>
        <authorList>
            <person name="Smith T.J."/>
            <person name="Hill K.K."/>
            <person name="Foley B.T."/>
            <person name="Detter J.C."/>
            <person name="Munk A.C."/>
            <person name="Bruce D.C."/>
            <person name="Doggett N.A."/>
            <person name="Smith L.A."/>
            <person name="Marks J.D."/>
            <person name="Xie G."/>
            <person name="Brettin T.S."/>
        </authorList>
    </citation>
    <scope>NUCLEOTIDE SEQUENCE [LARGE SCALE GENOMIC DNA]</scope>
    <source>
        <strain>Hall / ATCC 3502 / NCTC 13319 / Type A</strain>
    </source>
</reference>
<proteinExistence type="inferred from homology"/>
<organism>
    <name type="scientific">Clostridium botulinum (strain Hall / ATCC 3502 / NCTC 13319 / Type A)</name>
    <dbReference type="NCBI Taxonomy" id="441771"/>
    <lineage>
        <taxon>Bacteria</taxon>
        <taxon>Bacillati</taxon>
        <taxon>Bacillota</taxon>
        <taxon>Clostridia</taxon>
        <taxon>Eubacteriales</taxon>
        <taxon>Clostridiaceae</taxon>
        <taxon>Clostridium</taxon>
    </lineage>
</organism>
<gene>
    <name evidence="1" type="primary">fusA</name>
    <name type="ordered locus">CBO3483</name>
    <name type="ordered locus">CLC_3428</name>
</gene>
<accession>A5I7K9</accession>
<accession>A7G8U1</accession>
<evidence type="ECO:0000255" key="1">
    <source>
        <dbReference type="HAMAP-Rule" id="MF_00054"/>
    </source>
</evidence>
<sequence>MANKEYPLAKFRNIGIMAHIDAGKTTATERILFYTGKTHKIGETHEGAATMDWMEQEQERGITITSAATTCFWKDHQVNIIDTPGHVDFTVEVERSLRVLDGAVTILDAKSGVEPQTETVWRQADNYKVPRMVFINKMDKLGADFLMSVGTLRERLHANAVPLQLPIGAEDSFSGIIDLVKNDAVIYKDDLGTVMDETEIPEDMKEIAEEYRTMLLEAVAEVDEDIMMKYLEGEEISVEEIKTALRKGVLANKIVPVLCGSAYKNKGVQLLLDAIIEFMPSPLDIEDVKGTEPTTGEEMTRPADAKAPLAALAFKIATDPFIGKLAFTRIYSGTMKSGTYVFNSNKGKRERIGRLVKMHANHREDVEELKAGELGAIVGLKDTTTGDTLCDDADPIILENMEFPEPVIDVSIEPKTKAGQEKMGIALAKLAEEDPTFRTYTNQETGQTIIAGMGELHLEIIVDRLIREFKVECNVGQPQVAYKETIKKHVKAEGKFIRQSGGRGQYGHCWIEMMPTEGEYEFQNAVVGGSIPKEYIPAIDNGIQEASQSGIIAGYPVINFKVKLFDGSYHDVDSSEMAFKIAGSMAFKNAMSKADAVLLEPSMKVEVVVPEEYMGDVIGDINSRRGRIEGMTPRAGAEVIRAFVPLSEMFGYATTLRSKTQGRGNYVMQFDHYEEVPKSIQDKVIGERK</sequence>
<keyword id="KW-0963">Cytoplasm</keyword>
<keyword id="KW-0251">Elongation factor</keyword>
<keyword id="KW-0342">GTP-binding</keyword>
<keyword id="KW-0547">Nucleotide-binding</keyword>
<keyword id="KW-0648">Protein biosynthesis</keyword>
<keyword id="KW-1185">Reference proteome</keyword>
<dbReference type="EMBL" id="CP000727">
    <property type="protein sequence ID" value="ABS38050.1"/>
    <property type="molecule type" value="Genomic_DNA"/>
</dbReference>
<dbReference type="EMBL" id="AM412317">
    <property type="protein sequence ID" value="CAL85044.1"/>
    <property type="molecule type" value="Genomic_DNA"/>
</dbReference>
<dbReference type="RefSeq" id="WP_003357512.1">
    <property type="nucleotide sequence ID" value="NC_009698.1"/>
</dbReference>
<dbReference type="RefSeq" id="YP_001255965.1">
    <property type="nucleotide sequence ID" value="NC_009495.1"/>
</dbReference>
<dbReference type="RefSeq" id="YP_001389206.1">
    <property type="nucleotide sequence ID" value="NC_009698.1"/>
</dbReference>
<dbReference type="SMR" id="A5I7K9"/>
<dbReference type="GeneID" id="5187731"/>
<dbReference type="KEGG" id="cbh:CLC_3428"/>
<dbReference type="KEGG" id="cbo:CBO3483"/>
<dbReference type="PATRIC" id="fig|413999.7.peg.3460"/>
<dbReference type="HOGENOM" id="CLU_002794_4_1_9"/>
<dbReference type="PRO" id="PR:A5I7K9"/>
<dbReference type="Proteomes" id="UP000001986">
    <property type="component" value="Chromosome"/>
</dbReference>
<dbReference type="GO" id="GO:0005829">
    <property type="term" value="C:cytosol"/>
    <property type="evidence" value="ECO:0000318"/>
    <property type="project" value="GO_Central"/>
</dbReference>
<dbReference type="GO" id="GO:0005525">
    <property type="term" value="F:GTP binding"/>
    <property type="evidence" value="ECO:0007669"/>
    <property type="project" value="UniProtKB-UniRule"/>
</dbReference>
<dbReference type="GO" id="GO:0003924">
    <property type="term" value="F:GTPase activity"/>
    <property type="evidence" value="ECO:0007669"/>
    <property type="project" value="InterPro"/>
</dbReference>
<dbReference type="GO" id="GO:0003746">
    <property type="term" value="F:translation elongation factor activity"/>
    <property type="evidence" value="ECO:0007669"/>
    <property type="project" value="UniProtKB-UniRule"/>
</dbReference>
<dbReference type="GO" id="GO:0016150">
    <property type="term" value="F:translation release factor activity, codon nonspecific"/>
    <property type="evidence" value="ECO:0000318"/>
    <property type="project" value="GO_Central"/>
</dbReference>
<dbReference type="GO" id="GO:0006415">
    <property type="term" value="P:translational termination"/>
    <property type="evidence" value="ECO:0000318"/>
    <property type="project" value="GO_Central"/>
</dbReference>
<dbReference type="CDD" id="cd01886">
    <property type="entry name" value="EF-G"/>
    <property type="match status" value="1"/>
</dbReference>
<dbReference type="CDD" id="cd16262">
    <property type="entry name" value="EFG_III"/>
    <property type="match status" value="1"/>
</dbReference>
<dbReference type="CDD" id="cd01434">
    <property type="entry name" value="EFG_mtEFG1_IV"/>
    <property type="match status" value="1"/>
</dbReference>
<dbReference type="CDD" id="cd03713">
    <property type="entry name" value="EFG_mtEFG_C"/>
    <property type="match status" value="1"/>
</dbReference>
<dbReference type="CDD" id="cd04088">
    <property type="entry name" value="EFG_mtEFG_II"/>
    <property type="match status" value="1"/>
</dbReference>
<dbReference type="FunFam" id="2.40.30.10:FF:000006">
    <property type="entry name" value="Elongation factor G"/>
    <property type="match status" value="1"/>
</dbReference>
<dbReference type="FunFam" id="3.30.230.10:FF:000003">
    <property type="entry name" value="Elongation factor G"/>
    <property type="match status" value="1"/>
</dbReference>
<dbReference type="FunFam" id="3.30.70.240:FF:000001">
    <property type="entry name" value="Elongation factor G"/>
    <property type="match status" value="1"/>
</dbReference>
<dbReference type="FunFam" id="3.30.70.870:FF:000001">
    <property type="entry name" value="Elongation factor G"/>
    <property type="match status" value="1"/>
</dbReference>
<dbReference type="FunFam" id="3.40.50.300:FF:000029">
    <property type="entry name" value="Elongation factor G"/>
    <property type="match status" value="1"/>
</dbReference>
<dbReference type="Gene3D" id="3.30.230.10">
    <property type="match status" value="1"/>
</dbReference>
<dbReference type="Gene3D" id="3.30.70.240">
    <property type="match status" value="1"/>
</dbReference>
<dbReference type="Gene3D" id="3.30.70.870">
    <property type="entry name" value="Elongation Factor G (Translational Gtpase), domain 3"/>
    <property type="match status" value="1"/>
</dbReference>
<dbReference type="Gene3D" id="3.40.50.300">
    <property type="entry name" value="P-loop containing nucleotide triphosphate hydrolases"/>
    <property type="match status" value="1"/>
</dbReference>
<dbReference type="Gene3D" id="2.40.30.10">
    <property type="entry name" value="Translation factors"/>
    <property type="match status" value="1"/>
</dbReference>
<dbReference type="HAMAP" id="MF_00054_B">
    <property type="entry name" value="EF_G_EF_2_B"/>
    <property type="match status" value="1"/>
</dbReference>
<dbReference type="InterPro" id="IPR053905">
    <property type="entry name" value="EF-G-like_DII"/>
</dbReference>
<dbReference type="InterPro" id="IPR041095">
    <property type="entry name" value="EFG_II"/>
</dbReference>
<dbReference type="InterPro" id="IPR009022">
    <property type="entry name" value="EFG_III"/>
</dbReference>
<dbReference type="InterPro" id="IPR035647">
    <property type="entry name" value="EFG_III/V"/>
</dbReference>
<dbReference type="InterPro" id="IPR047872">
    <property type="entry name" value="EFG_IV"/>
</dbReference>
<dbReference type="InterPro" id="IPR035649">
    <property type="entry name" value="EFG_V"/>
</dbReference>
<dbReference type="InterPro" id="IPR000640">
    <property type="entry name" value="EFG_V-like"/>
</dbReference>
<dbReference type="InterPro" id="IPR031157">
    <property type="entry name" value="G_TR_CS"/>
</dbReference>
<dbReference type="InterPro" id="IPR027417">
    <property type="entry name" value="P-loop_NTPase"/>
</dbReference>
<dbReference type="InterPro" id="IPR020568">
    <property type="entry name" value="Ribosomal_Su5_D2-typ_SF"/>
</dbReference>
<dbReference type="InterPro" id="IPR014721">
    <property type="entry name" value="Ribsml_uS5_D2-typ_fold_subgr"/>
</dbReference>
<dbReference type="InterPro" id="IPR005225">
    <property type="entry name" value="Small_GTP-bd"/>
</dbReference>
<dbReference type="InterPro" id="IPR000795">
    <property type="entry name" value="T_Tr_GTP-bd_dom"/>
</dbReference>
<dbReference type="InterPro" id="IPR009000">
    <property type="entry name" value="Transl_B-barrel_sf"/>
</dbReference>
<dbReference type="InterPro" id="IPR004540">
    <property type="entry name" value="Transl_elong_EFG/EF2"/>
</dbReference>
<dbReference type="InterPro" id="IPR005517">
    <property type="entry name" value="Transl_elong_EFG/EF2_IV"/>
</dbReference>
<dbReference type="NCBIfam" id="TIGR00484">
    <property type="entry name" value="EF-G"/>
    <property type="match status" value="1"/>
</dbReference>
<dbReference type="NCBIfam" id="NF009379">
    <property type="entry name" value="PRK12740.1-3"/>
    <property type="match status" value="1"/>
</dbReference>
<dbReference type="NCBIfam" id="NF009381">
    <property type="entry name" value="PRK12740.1-5"/>
    <property type="match status" value="1"/>
</dbReference>
<dbReference type="NCBIfam" id="TIGR00231">
    <property type="entry name" value="small_GTP"/>
    <property type="match status" value="1"/>
</dbReference>
<dbReference type="PANTHER" id="PTHR43261:SF1">
    <property type="entry name" value="RIBOSOME-RELEASING FACTOR 2, MITOCHONDRIAL"/>
    <property type="match status" value="1"/>
</dbReference>
<dbReference type="PANTHER" id="PTHR43261">
    <property type="entry name" value="TRANSLATION ELONGATION FACTOR G-RELATED"/>
    <property type="match status" value="1"/>
</dbReference>
<dbReference type="Pfam" id="PF22042">
    <property type="entry name" value="EF-G_D2"/>
    <property type="match status" value="1"/>
</dbReference>
<dbReference type="Pfam" id="PF00679">
    <property type="entry name" value="EFG_C"/>
    <property type="match status" value="1"/>
</dbReference>
<dbReference type="Pfam" id="PF14492">
    <property type="entry name" value="EFG_III"/>
    <property type="match status" value="1"/>
</dbReference>
<dbReference type="Pfam" id="PF03764">
    <property type="entry name" value="EFG_IV"/>
    <property type="match status" value="1"/>
</dbReference>
<dbReference type="Pfam" id="PF00009">
    <property type="entry name" value="GTP_EFTU"/>
    <property type="match status" value="1"/>
</dbReference>
<dbReference type="PRINTS" id="PR00315">
    <property type="entry name" value="ELONGATNFCT"/>
</dbReference>
<dbReference type="SMART" id="SM00838">
    <property type="entry name" value="EFG_C"/>
    <property type="match status" value="1"/>
</dbReference>
<dbReference type="SMART" id="SM00889">
    <property type="entry name" value="EFG_IV"/>
    <property type="match status" value="1"/>
</dbReference>
<dbReference type="SUPFAM" id="SSF54980">
    <property type="entry name" value="EF-G C-terminal domain-like"/>
    <property type="match status" value="2"/>
</dbReference>
<dbReference type="SUPFAM" id="SSF52540">
    <property type="entry name" value="P-loop containing nucleoside triphosphate hydrolases"/>
    <property type="match status" value="1"/>
</dbReference>
<dbReference type="SUPFAM" id="SSF54211">
    <property type="entry name" value="Ribosomal protein S5 domain 2-like"/>
    <property type="match status" value="1"/>
</dbReference>
<dbReference type="SUPFAM" id="SSF50447">
    <property type="entry name" value="Translation proteins"/>
    <property type="match status" value="1"/>
</dbReference>
<dbReference type="PROSITE" id="PS00301">
    <property type="entry name" value="G_TR_1"/>
    <property type="match status" value="1"/>
</dbReference>
<dbReference type="PROSITE" id="PS51722">
    <property type="entry name" value="G_TR_2"/>
    <property type="match status" value="1"/>
</dbReference>